<name>SNURF_RABIT</name>
<reference key="1">
    <citation type="journal article" date="1999" name="Proc. Natl. Acad. Sci. U.S.A.">
        <title>An imprinted, mammalian bicistronic transcript encodes two independent proteins.</title>
        <authorList>
            <person name="Gray T.A."/>
            <person name="Saitoh S."/>
            <person name="Nicholls R.D."/>
        </authorList>
    </citation>
    <scope>NUCLEOTIDE SEQUENCE [MRNA]</scope>
</reference>
<evidence type="ECO:0000250" key="1"/>
<evidence type="ECO:0000305" key="2"/>
<protein>
    <recommendedName>
        <fullName>SNRPN upstream reading frame protein</fullName>
    </recommendedName>
</protein>
<feature type="chain" id="PRO_0000312996" description="SNRPN upstream reading frame protein">
    <location>
        <begin position="1"/>
        <end position="71"/>
    </location>
</feature>
<gene>
    <name type="primary">SNURF</name>
</gene>
<keyword id="KW-0539">Nucleus</keyword>
<keyword id="KW-1185">Reference proteome</keyword>
<comment type="subcellular location">
    <subcellularLocation>
        <location evidence="1">Nucleus</location>
    </subcellularLocation>
</comment>
<comment type="miscellaneous">
    <text>Encoded on a bicistronic transcript that code for two proteins, SNRPN and SNURF.</text>
</comment>
<comment type="similarity">
    <text evidence="2">Belongs to the SNURF family.</text>
</comment>
<organism>
    <name type="scientific">Oryctolagus cuniculus</name>
    <name type="common">Rabbit</name>
    <dbReference type="NCBI Taxonomy" id="9986"/>
    <lineage>
        <taxon>Eukaryota</taxon>
        <taxon>Metazoa</taxon>
        <taxon>Chordata</taxon>
        <taxon>Craniata</taxon>
        <taxon>Vertebrata</taxon>
        <taxon>Euteleostomi</taxon>
        <taxon>Mammalia</taxon>
        <taxon>Eutheria</taxon>
        <taxon>Euarchontoglires</taxon>
        <taxon>Glires</taxon>
        <taxon>Lagomorpha</taxon>
        <taxon>Leporidae</taxon>
        <taxon>Oryctolagus</taxon>
    </lineage>
</organism>
<dbReference type="EMBL" id="AF101043">
    <property type="protein sequence ID" value="AAD31390.1"/>
    <property type="molecule type" value="mRNA"/>
</dbReference>
<dbReference type="RefSeq" id="NP_001076183.1">
    <property type="nucleotide sequence ID" value="NM_001082714.1"/>
</dbReference>
<dbReference type="RefSeq" id="XP_017200253.1">
    <property type="nucleotide sequence ID" value="XM_017344764.1"/>
</dbReference>
<dbReference type="RefSeq" id="XP_069909361.1">
    <property type="nucleotide sequence ID" value="XM_070053260.1"/>
</dbReference>
<dbReference type="RefSeq" id="XP_069909362.1">
    <property type="nucleotide sequence ID" value="XM_070053261.1"/>
</dbReference>
<dbReference type="RefSeq" id="XP_069909363.1">
    <property type="nucleotide sequence ID" value="XM_070053262.1"/>
</dbReference>
<dbReference type="RefSeq" id="XP_069909364.1">
    <property type="nucleotide sequence ID" value="XM_070053263.1"/>
</dbReference>
<dbReference type="FunCoup" id="Q9XS97">
    <property type="interactions" value="163"/>
</dbReference>
<dbReference type="PaxDb" id="9986-ENSOCUP00000026167"/>
<dbReference type="GeneID" id="100009465"/>
<dbReference type="KEGG" id="ocu:100009465"/>
<dbReference type="KEGG" id="ocu:108175375"/>
<dbReference type="CTD" id="8926"/>
<dbReference type="eggNOG" id="ENOG502T5G1">
    <property type="taxonomic scope" value="Eukaryota"/>
</dbReference>
<dbReference type="HOGENOM" id="CLU_165583_0_0_1"/>
<dbReference type="InParanoid" id="Q9XS97"/>
<dbReference type="OMA" id="QVKHRIA"/>
<dbReference type="OrthoDB" id="9727301at2759"/>
<dbReference type="TreeFam" id="TF338383"/>
<dbReference type="Proteomes" id="UP000001811">
    <property type="component" value="Unplaced"/>
</dbReference>
<dbReference type="GO" id="GO:0016607">
    <property type="term" value="C:nuclear speck"/>
    <property type="evidence" value="ECO:0007669"/>
    <property type="project" value="TreeGrafter"/>
</dbReference>
<dbReference type="InterPro" id="IPR009847">
    <property type="entry name" value="SNURF"/>
</dbReference>
<dbReference type="PANTHER" id="PTHR14508">
    <property type="entry name" value="SNRPN UPSTREAM READING FRAME PROTEIN, SNURF"/>
    <property type="match status" value="1"/>
</dbReference>
<dbReference type="PANTHER" id="PTHR14508:SF2">
    <property type="entry name" value="SNRPN UPSTREAM READING FRAME PROTEIN-RELATED"/>
    <property type="match status" value="1"/>
</dbReference>
<dbReference type="Pfam" id="PF07192">
    <property type="entry name" value="SNURF"/>
    <property type="match status" value="1"/>
</dbReference>
<accession>Q9XS97</accession>
<sequence length="71" mass="8412">MERARDRLHLRRTTEQHVPEVEVQVKRRRTASLSNQECQLYPRRSQQQQVPVVDFQAELRQAFLAETPRGG</sequence>
<proteinExistence type="inferred from homology"/>